<name>SKB1_SCHPO</name>
<reference key="1">
    <citation type="journal article" date="1996" name="Proc. Natl. Acad. Sci. U.S.A.">
        <title>The highly conserved skb1 gene encodes a protein that interacts with Shk1, a fission yeast Ste20/PAK homolog.</title>
        <authorList>
            <person name="Gilbreth M."/>
            <person name="Yang P."/>
            <person name="Wang D."/>
            <person name="Frost J."/>
            <person name="Polverino A."/>
            <person name="Cobb M.H."/>
            <person name="Marcus S."/>
        </authorList>
    </citation>
    <scope>NUCLEOTIDE SEQUENCE [GENOMIC DNA]</scope>
    <scope>SUBUNIT</scope>
</reference>
<reference key="2">
    <citation type="journal article" date="2002" name="Nature">
        <title>The genome sequence of Schizosaccharomyces pombe.</title>
        <authorList>
            <person name="Wood V."/>
            <person name="Gwilliam R."/>
            <person name="Rajandream M.A."/>
            <person name="Lyne M.H."/>
            <person name="Lyne R."/>
            <person name="Stewart A."/>
            <person name="Sgouros J.G."/>
            <person name="Peat N."/>
            <person name="Hayles J."/>
            <person name="Baker S.G."/>
            <person name="Basham D."/>
            <person name="Bowman S."/>
            <person name="Brooks K."/>
            <person name="Brown D."/>
            <person name="Brown S."/>
            <person name="Chillingworth T."/>
            <person name="Churcher C.M."/>
            <person name="Collins M."/>
            <person name="Connor R."/>
            <person name="Cronin A."/>
            <person name="Davis P."/>
            <person name="Feltwell T."/>
            <person name="Fraser A."/>
            <person name="Gentles S."/>
            <person name="Goble A."/>
            <person name="Hamlin N."/>
            <person name="Harris D.E."/>
            <person name="Hidalgo J."/>
            <person name="Hodgson G."/>
            <person name="Holroyd S."/>
            <person name="Hornsby T."/>
            <person name="Howarth S."/>
            <person name="Huckle E.J."/>
            <person name="Hunt S."/>
            <person name="Jagels K."/>
            <person name="James K.D."/>
            <person name="Jones L."/>
            <person name="Jones M."/>
            <person name="Leather S."/>
            <person name="McDonald S."/>
            <person name="McLean J."/>
            <person name="Mooney P."/>
            <person name="Moule S."/>
            <person name="Mungall K.L."/>
            <person name="Murphy L.D."/>
            <person name="Niblett D."/>
            <person name="Odell C."/>
            <person name="Oliver K."/>
            <person name="O'Neil S."/>
            <person name="Pearson D."/>
            <person name="Quail M.A."/>
            <person name="Rabbinowitsch E."/>
            <person name="Rutherford K.M."/>
            <person name="Rutter S."/>
            <person name="Saunders D."/>
            <person name="Seeger K."/>
            <person name="Sharp S."/>
            <person name="Skelton J."/>
            <person name="Simmonds M.N."/>
            <person name="Squares R."/>
            <person name="Squares S."/>
            <person name="Stevens K."/>
            <person name="Taylor K."/>
            <person name="Taylor R.G."/>
            <person name="Tivey A."/>
            <person name="Walsh S.V."/>
            <person name="Warren T."/>
            <person name="Whitehead S."/>
            <person name="Woodward J.R."/>
            <person name="Volckaert G."/>
            <person name="Aert R."/>
            <person name="Robben J."/>
            <person name="Grymonprez B."/>
            <person name="Weltjens I."/>
            <person name="Vanstreels E."/>
            <person name="Rieger M."/>
            <person name="Schaefer M."/>
            <person name="Mueller-Auer S."/>
            <person name="Gabel C."/>
            <person name="Fuchs M."/>
            <person name="Duesterhoeft A."/>
            <person name="Fritzc C."/>
            <person name="Holzer E."/>
            <person name="Moestl D."/>
            <person name="Hilbert H."/>
            <person name="Borzym K."/>
            <person name="Langer I."/>
            <person name="Beck A."/>
            <person name="Lehrach H."/>
            <person name="Reinhardt R."/>
            <person name="Pohl T.M."/>
            <person name="Eger P."/>
            <person name="Zimmermann W."/>
            <person name="Wedler H."/>
            <person name="Wambutt R."/>
            <person name="Purnelle B."/>
            <person name="Goffeau A."/>
            <person name="Cadieu E."/>
            <person name="Dreano S."/>
            <person name="Gloux S."/>
            <person name="Lelaure V."/>
            <person name="Mottier S."/>
            <person name="Galibert F."/>
            <person name="Aves S.J."/>
            <person name="Xiang Z."/>
            <person name="Hunt C."/>
            <person name="Moore K."/>
            <person name="Hurst S.M."/>
            <person name="Lucas M."/>
            <person name="Rochet M."/>
            <person name="Gaillardin C."/>
            <person name="Tallada V.A."/>
            <person name="Garzon A."/>
            <person name="Thode G."/>
            <person name="Daga R.R."/>
            <person name="Cruzado L."/>
            <person name="Jimenez J."/>
            <person name="Sanchez M."/>
            <person name="del Rey F."/>
            <person name="Benito J."/>
            <person name="Dominguez A."/>
            <person name="Revuelta J.L."/>
            <person name="Moreno S."/>
            <person name="Armstrong J."/>
            <person name="Forsburg S.L."/>
            <person name="Cerutti L."/>
            <person name="Lowe T."/>
            <person name="McCombie W.R."/>
            <person name="Paulsen I."/>
            <person name="Potashkin J."/>
            <person name="Shpakovski G.V."/>
            <person name="Ussery D."/>
            <person name="Barrell B.G."/>
            <person name="Nurse P."/>
        </authorList>
    </citation>
    <scope>NUCLEOTIDE SEQUENCE [LARGE SCALE GENOMIC DNA]</scope>
    <source>
        <strain>972 / ATCC 24843</strain>
    </source>
</reference>
<reference key="3">
    <citation type="journal article" date="1998" name="Proc. Natl. Acad. Sci. U.S.A.">
        <title>Negative regulation of mitosis in fission yeast by the shk1 interacting protein skb1 and its human homolog, Skb1Hs.</title>
        <authorList>
            <person name="Gilbreth M."/>
            <person name="Yang P."/>
            <person name="Bartholomeusz G."/>
            <person name="Pimental R.A."/>
            <person name="Kansra S."/>
            <person name="Gadiraju R."/>
            <person name="Marcus S."/>
        </authorList>
    </citation>
    <scope>FUNCTION</scope>
</reference>
<reference key="4">
    <citation type="journal article" date="2001" name="J. Biol. Chem.">
        <title>The highly conserved protein methyltransferase, Skb1, is a mediator of hyperosmotic stress response in the fission yeast Schizosaccharomyces pombe.</title>
        <authorList>
            <person name="Bao S."/>
            <person name="Qyang Y."/>
            <person name="Yang P."/>
            <person name="Kim H."/>
            <person name="Du H."/>
            <person name="Bartholomeusz G."/>
            <person name="Henkel J."/>
            <person name="Pimental R.A."/>
            <person name="Verde F."/>
            <person name="Marcus S."/>
        </authorList>
    </citation>
    <scope>FUNCTION</scope>
    <scope>SUBCELLULAR LOCATION</scope>
</reference>
<reference key="5">
    <citation type="journal article" date="2003" name="J. Biol. Chem.">
        <title>Control of cell polarity in fission yeast by association of Orb6p kinase with the highly conserved protein methyltransferase Skb1p.</title>
        <authorList>
            <person name="Wiley D.J."/>
            <person name="Marcus S."/>
            <person name="D'urso G."/>
            <person name="Verde F."/>
        </authorList>
    </citation>
    <scope>FUNCTION</scope>
    <scope>SUBCELLULAR LOCATION</scope>
    <scope>INTERACTION WITH ORB6</scope>
    <scope>DISRUPTION PHENOTYPE</scope>
</reference>
<reference key="6">
    <citation type="journal article" date="2006" name="Nat. Biotechnol.">
        <title>ORFeome cloning and global analysis of protein localization in the fission yeast Schizosaccharomyces pombe.</title>
        <authorList>
            <person name="Matsuyama A."/>
            <person name="Arai R."/>
            <person name="Yashiroda Y."/>
            <person name="Shirai A."/>
            <person name="Kamata A."/>
            <person name="Sekido S."/>
            <person name="Kobayashi Y."/>
            <person name="Hashimoto A."/>
            <person name="Hamamoto M."/>
            <person name="Hiraoka Y."/>
            <person name="Horinouchi S."/>
            <person name="Yoshida M."/>
        </authorList>
    </citation>
    <scope>SUBCELLULAR LOCATION [LARGE SCALE ANALYSIS]</scope>
</reference>
<reference key="7">
    <citation type="journal article" date="2013" name="Mol. Biol. Cell">
        <title>Compartmentalized nodes control mitotic entry signaling in fission yeast.</title>
        <authorList>
            <person name="Deng L."/>
            <person name="Moseley J.B."/>
        </authorList>
    </citation>
    <scope>FUNCTION</scope>
    <scope>INTERACTION WITH CDR1 AND WEE1</scope>
</reference>
<reference key="8">
    <citation type="journal article" date="2014" name="Mol. Biol. Cell">
        <title>Megadalton-node assembly by binding of Skb1 to the membrane anchor Slf1.</title>
        <authorList>
            <person name="Deng L."/>
            <person name="Kabeche R."/>
            <person name="Wang N."/>
            <person name="Wu J.Q."/>
            <person name="Moseley J.B."/>
        </authorList>
    </citation>
    <scope>FUNCTION</scope>
    <scope>SUBCELLULAR LOCATION</scope>
</reference>
<organism>
    <name type="scientific">Schizosaccharomyces pombe (strain 972 / ATCC 24843)</name>
    <name type="common">Fission yeast</name>
    <dbReference type="NCBI Taxonomy" id="284812"/>
    <lineage>
        <taxon>Eukaryota</taxon>
        <taxon>Fungi</taxon>
        <taxon>Dikarya</taxon>
        <taxon>Ascomycota</taxon>
        <taxon>Taphrinomycotina</taxon>
        <taxon>Schizosaccharomycetes</taxon>
        <taxon>Schizosaccharomycetales</taxon>
        <taxon>Schizosaccharomycetaceae</taxon>
        <taxon>Schizosaccharomyces</taxon>
    </lineage>
</organism>
<accession>P78963</accession>
<accession>A0AAN2HEP1</accession>
<accession>O42946</accession>
<comment type="function">
    <text evidence="2 5 6 8 9 11">S-adenosyl-L-methionine-dependent protein-arginine N-methyltransferase that can catalyze both the mono- and symmetric (type II) dimethylation of the guanidino nitrogens of arginine residues in target proteins (By similarity). Delays mitotic entry by inhibiting the Cdr1-Wee1 signaling pathway. Cortical nodes sequester Skb1 from its regulatory targets Cdr1 and Wee1 (PubMed:23615447, PubMed:25009287, PubMed:9843966). Positively modulates the shk1 kinase function. May be a mediator of hyperosmotic stress response (PubMed:11278267). Involved in the control of cell polarity by regulating the subcellular localization of Orb6 kinase (PubMed:12646585).</text>
</comment>
<comment type="subunit">
    <text evidence="6 8 10">Interacts with the N-terminal regulatory domain of shk1. Shk1, cdc42 and skb1 are able to form a ternary complex in vivo (PubMed:8943016). Interacts with orb6 (PubMed:12646585). Interacts with Cdr1 and the Cdr1 inhibitory target Wee1 (PubMed:23615447).</text>
</comment>
<comment type="subcellular location">
    <subcellularLocation>
        <location evidence="5">Nucleus</location>
    </subcellularLocation>
    <subcellularLocation>
        <location evidence="5 6">Cell tip</location>
    </subcellularLocation>
    <subcellularLocation>
        <location evidence="5">Cell septum</location>
    </subcellularLocation>
    <subcellularLocation>
        <location evidence="7 9">Cytoplasm</location>
        <location evidence="7 9">Cell cortex</location>
    </subcellularLocation>
    <text evidence="5">Localizes to the cell tips during interphase and to the cell septum during mitosis.</text>
</comment>
<comment type="disruption phenotype">
    <text evidence="6">Leads to a redistribution of the Orb6 away from the cell tips.</text>
</comment>
<comment type="similarity">
    <text evidence="4">Belongs to the class I-like SAM-binding methyltransferase superfamily. Protein arginine N-methyltransferase family.</text>
</comment>
<comment type="sequence caution" evidence="14">
    <conflict type="erroneous initiation">
        <sequence resource="EMBL-CDS" id="AAC49571"/>
    </conflict>
    <text>Extended N-terminus.</text>
</comment>
<dbReference type="EC" id="2.1.1.-" evidence="2"/>
<dbReference type="EMBL" id="U59684">
    <property type="protein sequence ID" value="AAC49571.1"/>
    <property type="status" value="ALT_INIT"/>
    <property type="molecule type" value="Genomic_DNA"/>
</dbReference>
<dbReference type="EMBL" id="CU329671">
    <property type="protein sequence ID" value="CAK9840239.1"/>
    <property type="molecule type" value="Genomic_DNA"/>
</dbReference>
<dbReference type="PIR" id="T39614">
    <property type="entry name" value="T39614"/>
</dbReference>
<dbReference type="PIR" id="T48644">
    <property type="entry name" value="T48644"/>
</dbReference>
<dbReference type="RefSeq" id="NP_595936.1">
    <property type="nucleotide sequence ID" value="NM_001021844.2"/>
</dbReference>
<dbReference type="SMR" id="P78963"/>
<dbReference type="BioGRID" id="276637">
    <property type="interactions" value="39"/>
</dbReference>
<dbReference type="FunCoup" id="P78963">
    <property type="interactions" value="926"/>
</dbReference>
<dbReference type="IntAct" id="P78963">
    <property type="interactions" value="1"/>
</dbReference>
<dbReference type="STRING" id="284812.P78963"/>
<dbReference type="PaxDb" id="4896-SPBC16H5.11c.1"/>
<dbReference type="EnsemblFungi" id="SPBC16H5.11c.1">
    <property type="protein sequence ID" value="SPBC16H5.11c.1:pep"/>
    <property type="gene ID" value="SPBC16H5.11c"/>
</dbReference>
<dbReference type="GeneID" id="2540099"/>
<dbReference type="KEGG" id="spo:2540099"/>
<dbReference type="PomBase" id="SPBC16H5.11c">
    <property type="gene designation" value="skb1"/>
</dbReference>
<dbReference type="VEuPathDB" id="FungiDB:SPBC16H5.11c"/>
<dbReference type="eggNOG" id="KOG0822">
    <property type="taxonomic scope" value="Eukaryota"/>
</dbReference>
<dbReference type="HOGENOM" id="CLU_010247_0_0_1"/>
<dbReference type="InParanoid" id="P78963"/>
<dbReference type="OMA" id="IKYAWYE"/>
<dbReference type="PhylomeDB" id="P78963"/>
<dbReference type="Reactome" id="R-SPO-3214858">
    <property type="pathway name" value="RMTs methylate histone arginines"/>
</dbReference>
<dbReference type="PRO" id="PR:P78963"/>
<dbReference type="Proteomes" id="UP000002485">
    <property type="component" value="Chromosome II"/>
</dbReference>
<dbReference type="GO" id="GO:0071521">
    <property type="term" value="C:Cdc42 GTPase complex"/>
    <property type="evidence" value="ECO:0000353"/>
    <property type="project" value="PomBase"/>
</dbReference>
<dbReference type="GO" id="GO:0005938">
    <property type="term" value="C:cell cortex"/>
    <property type="evidence" value="ECO:0007005"/>
    <property type="project" value="PomBase"/>
</dbReference>
<dbReference type="GO" id="GO:0030428">
    <property type="term" value="C:cell septum"/>
    <property type="evidence" value="ECO:0007669"/>
    <property type="project" value="UniProtKB-SubCell"/>
</dbReference>
<dbReference type="GO" id="GO:0051286">
    <property type="term" value="C:cell tip"/>
    <property type="evidence" value="ECO:0000314"/>
    <property type="project" value="PomBase"/>
</dbReference>
<dbReference type="GO" id="GO:0005829">
    <property type="term" value="C:cytosol"/>
    <property type="evidence" value="ECO:0000318"/>
    <property type="project" value="GO_Central"/>
</dbReference>
<dbReference type="GO" id="GO:1990463">
    <property type="term" value="C:lateral cortical node"/>
    <property type="evidence" value="ECO:0000314"/>
    <property type="project" value="PomBase"/>
</dbReference>
<dbReference type="GO" id="GO:0005634">
    <property type="term" value="C:nucleus"/>
    <property type="evidence" value="ECO:0000314"/>
    <property type="project" value="PomBase"/>
</dbReference>
<dbReference type="GO" id="GO:0008469">
    <property type="term" value="F:histone arginine N-methyltransferase activity"/>
    <property type="evidence" value="ECO:0000318"/>
    <property type="project" value="GO_Central"/>
</dbReference>
<dbReference type="GO" id="GO:0016274">
    <property type="term" value="F:protein-arginine N-methyltransferase activity"/>
    <property type="evidence" value="ECO:0007669"/>
    <property type="project" value="InterPro"/>
</dbReference>
<dbReference type="GO" id="GO:0071470">
    <property type="term" value="P:cellular response to osmotic stress"/>
    <property type="evidence" value="ECO:0000315"/>
    <property type="project" value="PomBase"/>
</dbReference>
<dbReference type="GO" id="GO:0061246">
    <property type="term" value="P:establishment or maintenance of bipolar cell polarity regulating cell shape"/>
    <property type="evidence" value="ECO:0000316"/>
    <property type="project" value="PomBase"/>
</dbReference>
<dbReference type="GO" id="GO:1903359">
    <property type="term" value="P:lateral cortical node assembly"/>
    <property type="evidence" value="ECO:0000315"/>
    <property type="project" value="PomBase"/>
</dbReference>
<dbReference type="GO" id="GO:0032259">
    <property type="term" value="P:methylation"/>
    <property type="evidence" value="ECO:0007669"/>
    <property type="project" value="UniProtKB-KW"/>
</dbReference>
<dbReference type="GO" id="GO:1903360">
    <property type="term" value="P:protein localization to lateral cortical node"/>
    <property type="evidence" value="ECO:0000315"/>
    <property type="project" value="PomBase"/>
</dbReference>
<dbReference type="GO" id="GO:0006355">
    <property type="term" value="P:regulation of DNA-templated transcription"/>
    <property type="evidence" value="ECO:0000318"/>
    <property type="project" value="GO_Central"/>
</dbReference>
<dbReference type="GO" id="GO:2000100">
    <property type="term" value="P:regulation of establishment or maintenance of bipolar cell polarity regulating cell shape"/>
    <property type="evidence" value="ECO:0000316"/>
    <property type="project" value="PomBase"/>
</dbReference>
<dbReference type="Gene3D" id="3.20.20.150">
    <property type="entry name" value="Divalent-metal-dependent TIM barrel enzymes"/>
    <property type="match status" value="1"/>
</dbReference>
<dbReference type="Gene3D" id="2.70.160.11">
    <property type="entry name" value="Hnrnp arginine n-methyltransferase1"/>
    <property type="match status" value="1"/>
</dbReference>
<dbReference type="Gene3D" id="3.40.50.150">
    <property type="entry name" value="Vaccinia Virus protein VP39"/>
    <property type="match status" value="1"/>
</dbReference>
<dbReference type="InterPro" id="IPR025799">
    <property type="entry name" value="Arg_MeTrfase"/>
</dbReference>
<dbReference type="InterPro" id="IPR007857">
    <property type="entry name" value="Arg_MeTrfase_PRMT5"/>
</dbReference>
<dbReference type="InterPro" id="IPR035075">
    <property type="entry name" value="PRMT5"/>
</dbReference>
<dbReference type="InterPro" id="IPR035248">
    <property type="entry name" value="PRMT5_C"/>
</dbReference>
<dbReference type="InterPro" id="IPR035247">
    <property type="entry name" value="PRMT5_TIM"/>
</dbReference>
<dbReference type="InterPro" id="IPR029063">
    <property type="entry name" value="SAM-dependent_MTases_sf"/>
</dbReference>
<dbReference type="PANTHER" id="PTHR10738">
    <property type="entry name" value="PROTEIN ARGININE N-METHYLTRANSFERASE 5"/>
    <property type="match status" value="1"/>
</dbReference>
<dbReference type="PANTHER" id="PTHR10738:SF0">
    <property type="entry name" value="PROTEIN ARGININE N-METHYLTRANSFERASE 5"/>
    <property type="match status" value="1"/>
</dbReference>
<dbReference type="Pfam" id="PF05185">
    <property type="entry name" value="PRMT5"/>
    <property type="match status" value="1"/>
</dbReference>
<dbReference type="Pfam" id="PF17286">
    <property type="entry name" value="PRMT5_C"/>
    <property type="match status" value="1"/>
</dbReference>
<dbReference type="Pfam" id="PF17285">
    <property type="entry name" value="PRMT5_TIM"/>
    <property type="match status" value="1"/>
</dbReference>
<dbReference type="PIRSF" id="PIRSF015894">
    <property type="entry name" value="Skb1_MeTrfase"/>
    <property type="match status" value="1"/>
</dbReference>
<dbReference type="SUPFAM" id="SSF53335">
    <property type="entry name" value="S-adenosyl-L-methionine-dependent methyltransferases"/>
    <property type="match status" value="1"/>
</dbReference>
<dbReference type="PROSITE" id="PS51678">
    <property type="entry name" value="SAM_MT_PRMT"/>
    <property type="match status" value="1"/>
</dbReference>
<protein>
    <recommendedName>
        <fullName evidence="12">Protein arginine N-methyltransferase skb1</fullName>
        <ecNumber evidence="2">2.1.1.-</ecNumber>
    </recommendedName>
    <alternativeName>
        <fullName>Mitotic inhibitor skb1</fullName>
    </alternativeName>
    <alternativeName>
        <fullName evidence="13">Shk1 kinase-binding protein 1</fullName>
    </alternativeName>
    <alternativeName>
        <fullName evidence="2">Type II protein arginine N-methyltransferase</fullName>
        <shortName evidence="2">Type II PRMT</shortName>
    </alternativeName>
</protein>
<evidence type="ECO:0000250" key="1">
    <source>
        <dbReference type="UniProtKB" id="O14744"/>
    </source>
</evidence>
<evidence type="ECO:0000250" key="2">
    <source>
        <dbReference type="UniProtKB" id="P38274"/>
    </source>
</evidence>
<evidence type="ECO:0000250" key="3">
    <source>
        <dbReference type="UniProtKB" id="P46580"/>
    </source>
</evidence>
<evidence type="ECO:0000255" key="4">
    <source>
        <dbReference type="PROSITE-ProRule" id="PRU01015"/>
    </source>
</evidence>
<evidence type="ECO:0000269" key="5">
    <source>
    </source>
</evidence>
<evidence type="ECO:0000269" key="6">
    <source>
    </source>
</evidence>
<evidence type="ECO:0000269" key="7">
    <source>
    </source>
</evidence>
<evidence type="ECO:0000269" key="8">
    <source>
    </source>
</evidence>
<evidence type="ECO:0000269" key="9">
    <source>
    </source>
</evidence>
<evidence type="ECO:0000269" key="10">
    <source>
    </source>
</evidence>
<evidence type="ECO:0000269" key="11">
    <source>
    </source>
</evidence>
<evidence type="ECO:0000303" key="12">
    <source>
    </source>
</evidence>
<evidence type="ECO:0000303" key="13">
    <source>
    </source>
</evidence>
<evidence type="ECO:0000305" key="14"/>
<evidence type="ECO:0000312" key="15">
    <source>
        <dbReference type="PomBase" id="SPBC16H5.11c"/>
    </source>
</evidence>
<sequence length="625" mass="70859">MNSKTPTLGIVCSEGTISLSLEEGFEFVGVPLSGEGLKLRVEALAPSERLQEFLDDEVAYHPEENVHKVVGLSSAWLELDSEDTLIADRSEEVLLKEASYASYCGLSSIILNGPTSPMNVMRYARAVSSALNSTMNLKFLVQLAIESGHEDYFETWKMWDTIRSACGYHPRLKVALELPPACSPPIELVNRWYAEPIEMITMSCMAFVPNPNGYPVLGRKLRAIYALYLRLNPRILLWDNDAPEKIGDSPDYSIYMKHLFDSQPPAPLVEDLADSYKDYLQVPLQPLSYNLENITYEIFERDPVKYAQYEQAIFSALMDRDESSVTRIAVVGAGRGPLVDCALRAAISSSRTVDMIALEKNPNAFSMLLMRNRQDWAGKVTLVFGDMRTWNPDYKIDILVSELLGSMGDNELSPECLDGVQHVLDEETGICIPSSYISYVTPIMSPKLWSEARNMNDPNAFERQYVVLMNSFDFLAADDEFRFQSLWSFHHPNKDSEVYTKNLHNKRFASVRFQASSPGILHGFAGYFEATLYKDISLSIMPATMEAKSPDMFSWFPIYMPIKKPMYVPENSQLEFHMWRLTDGMRVWFEWCANAYLVLRNGSQIKLSSTEVHNISGKAFSCNMY</sequence>
<feature type="chain" id="PRO_0000212346" description="Protein arginine N-methyltransferase skb1">
    <location>
        <begin position="1"/>
        <end position="625"/>
    </location>
</feature>
<feature type="domain" description="SAM-dependent MTase PRMT-type" evidence="4">
    <location>
        <begin position="280"/>
        <end position="588"/>
    </location>
</feature>
<feature type="active site" description="Proton donor/acceptor" evidence="1">
    <location>
        <position position="402"/>
    </location>
</feature>
<feature type="active site" description="Proton donor/acceptor" evidence="1">
    <location>
        <position position="411"/>
    </location>
</feature>
<feature type="binding site" evidence="1">
    <location>
        <position position="296"/>
    </location>
    <ligand>
        <name>S-adenosyl-L-methionine</name>
        <dbReference type="ChEBI" id="CHEBI:59789"/>
    </ligand>
</feature>
<feature type="binding site" evidence="1">
    <location>
        <begin position="305"/>
        <end position="306"/>
    </location>
    <ligand>
        <name>S-adenosyl-L-methionine</name>
        <dbReference type="ChEBI" id="CHEBI:59789"/>
    </ligand>
</feature>
<feature type="binding site" evidence="1">
    <location>
        <position position="359"/>
    </location>
    <ligand>
        <name>S-adenosyl-L-methionine</name>
        <dbReference type="ChEBI" id="CHEBI:59789"/>
    </ligand>
</feature>
<feature type="binding site" evidence="1">
    <location>
        <begin position="386"/>
        <end position="387"/>
    </location>
    <ligand>
        <name>S-adenosyl-L-methionine</name>
        <dbReference type="ChEBI" id="CHEBI:59789"/>
    </ligand>
</feature>
<feature type="site" description="Critical for specifying symmetric addition of methyl groups" evidence="3">
    <location>
        <position position="299"/>
    </location>
</feature>
<feature type="sequence conflict" description="In Ref. 1; AAC49571." evidence="14" ref="1">
    <original>F</original>
    <variation>L</variation>
    <location>
        <position position="25"/>
    </location>
</feature>
<feature type="sequence conflict" description="In Ref. 1; AAC49571." evidence="14" ref="1">
    <original>PTSPM</original>
    <variation>SNFTQC</variation>
    <location>
        <begin position="114"/>
        <end position="118"/>
    </location>
</feature>
<feature type="sequence conflict" description="In Ref. 1; AAC49571." evidence="14" ref="1">
    <original>A</original>
    <variation>G</variation>
    <location>
        <position position="175"/>
    </location>
</feature>
<feature type="sequence conflict" description="In Ref. 1; AAC49571." evidence="14" ref="1">
    <original>G</original>
    <variation>A</variation>
    <location>
        <position position="378"/>
    </location>
</feature>
<keyword id="KW-0963">Cytoplasm</keyword>
<keyword id="KW-0489">Methyltransferase</keyword>
<keyword id="KW-0539">Nucleus</keyword>
<keyword id="KW-1185">Reference proteome</keyword>
<keyword id="KW-0949">S-adenosyl-L-methionine</keyword>
<keyword id="KW-0808">Transferase</keyword>
<proteinExistence type="evidence at protein level"/>
<gene>
    <name evidence="13" type="primary">skb1</name>
    <name evidence="15" type="synonym">rmt5</name>
    <name evidence="15" type="ORF">SPBC16H5.11c</name>
</gene>